<organism>
    <name type="scientific">Clostridium perfringens (strain ATCC 13124 / DSM 756 / JCM 1290 / NCIMB 6125 / NCTC 8237 / Type A)</name>
    <dbReference type="NCBI Taxonomy" id="195103"/>
    <lineage>
        <taxon>Bacteria</taxon>
        <taxon>Bacillati</taxon>
        <taxon>Bacillota</taxon>
        <taxon>Clostridia</taxon>
        <taxon>Eubacteriales</taxon>
        <taxon>Clostridiaceae</taxon>
        <taxon>Clostridium</taxon>
    </lineage>
</organism>
<keyword id="KW-0275">Fatty acid biosynthesis</keyword>
<keyword id="KW-0276">Fatty acid metabolism</keyword>
<keyword id="KW-0444">Lipid biosynthesis</keyword>
<keyword id="KW-0443">Lipid metabolism</keyword>
<keyword id="KW-0520">NAD</keyword>
<keyword id="KW-0560">Oxidoreductase</keyword>
<accession>Q0TNN6</accession>
<name>FABV_CLOP1</name>
<comment type="function">
    <text evidence="1">Involved in the fatty acid synthesis (FAS II). Catalyzes the reduction of a carbon-carbon double bond in an enoyl moiety that is covalently linked to a coenzyme A (CoA).</text>
</comment>
<comment type="catalytic activity">
    <reaction evidence="1">
        <text>a 2,3-saturated acyl-CoA + NAD(+) = a (2E)-enoyl-CoA + NADH + H(+)</text>
        <dbReference type="Rhea" id="RHEA:18177"/>
        <dbReference type="ChEBI" id="CHEBI:15378"/>
        <dbReference type="ChEBI" id="CHEBI:57540"/>
        <dbReference type="ChEBI" id="CHEBI:57945"/>
        <dbReference type="ChEBI" id="CHEBI:58856"/>
        <dbReference type="ChEBI" id="CHEBI:65111"/>
        <dbReference type="EC" id="1.3.1.44"/>
    </reaction>
</comment>
<comment type="pathway">
    <text evidence="1">Lipid metabolism; fatty acid biosynthesis.</text>
</comment>
<comment type="subunit">
    <text evidence="1">Monomer.</text>
</comment>
<comment type="similarity">
    <text evidence="1">Belongs to the TER reductase family.</text>
</comment>
<protein>
    <recommendedName>
        <fullName evidence="1">Trans-2-enoyl-CoA reductase [NADH]</fullName>
        <shortName evidence="1">TER</shortName>
        <ecNumber evidence="1">1.3.1.44</ecNumber>
    </recommendedName>
</protein>
<feature type="chain" id="PRO_1000070480" description="Trans-2-enoyl-CoA reductase [NADH]">
    <location>
        <begin position="1"/>
        <end position="389"/>
    </location>
</feature>
<feature type="active site" description="Proton donor" evidence="1">
    <location>
        <position position="234"/>
    </location>
</feature>
<feature type="binding site" evidence="1">
    <location>
        <begin position="47"/>
        <end position="52"/>
    </location>
    <ligand>
        <name>NAD(+)</name>
        <dbReference type="ChEBI" id="CHEBI:57540"/>
    </ligand>
</feature>
<feature type="binding site" evidence="1">
    <location>
        <begin position="73"/>
        <end position="74"/>
    </location>
    <ligand>
        <name>NAD(+)</name>
        <dbReference type="ChEBI" id="CHEBI:57540"/>
    </ligand>
</feature>
<feature type="binding site" evidence="1">
    <location>
        <begin position="110"/>
        <end position="111"/>
    </location>
    <ligand>
        <name>NAD(+)</name>
        <dbReference type="ChEBI" id="CHEBI:57540"/>
    </ligand>
</feature>
<feature type="binding site" evidence="1">
    <location>
        <begin position="138"/>
        <end position="139"/>
    </location>
    <ligand>
        <name>NAD(+)</name>
        <dbReference type="ChEBI" id="CHEBI:57540"/>
    </ligand>
</feature>
<feature type="binding site" evidence="1">
    <location>
        <position position="224"/>
    </location>
    <ligand>
        <name>substrate</name>
    </ligand>
</feature>
<feature type="binding site" evidence="1">
    <location>
        <position position="243"/>
    </location>
    <ligand>
        <name>NAD(+)</name>
        <dbReference type="ChEBI" id="CHEBI:57540"/>
    </ligand>
</feature>
<feature type="binding site" evidence="1">
    <location>
        <begin position="272"/>
        <end position="274"/>
    </location>
    <ligand>
        <name>NAD(+)</name>
        <dbReference type="ChEBI" id="CHEBI:57540"/>
    </ligand>
</feature>
<feature type="site" description="Plays an important role in discriminating NADH against NADPH" evidence="1">
    <location>
        <position position="74"/>
    </location>
</feature>
<evidence type="ECO:0000255" key="1">
    <source>
        <dbReference type="HAMAP-Rule" id="MF_01838"/>
    </source>
</evidence>
<sequence>MIVEPKFRGFICTTSHPTGCKKNVENQIEYVKENGKIEGAKRVLVLGASTGYGLASAIVASEACDAEVLGVSFEREAKGKRTASAGWYNIESLKKFSEGEGKKFISVNGDAFSNEVKSEVIDLIKENMGKVDLVIYSLAAPKRKDPVSGEVYSSCLKTVGAPFTSKTLDFHTGEIQDITINPATEEEIEGTRKVMGGEDWMLWIEALKEADVLEKGVKTIAYSYIGPEVTYPIYREGTIGRAKNDLEKTAGEINKVLKSLDGEGYISVNKALVTQASSAIPIVSLYISILYKVMKEKGTHEGCIEQIYRMFKELYEGKLNLDSENRIRIDDLEMAEDVQKAIEEIWPQITSENVFELSDAEDFKKEFFKLFGFGLEGVDYSEDVDITTV</sequence>
<reference key="1">
    <citation type="journal article" date="2006" name="Genome Res.">
        <title>Skewed genomic variability in strains of the toxigenic bacterial pathogen, Clostridium perfringens.</title>
        <authorList>
            <person name="Myers G.S.A."/>
            <person name="Rasko D.A."/>
            <person name="Cheung J.K."/>
            <person name="Ravel J."/>
            <person name="Seshadri R."/>
            <person name="DeBoy R.T."/>
            <person name="Ren Q."/>
            <person name="Varga J."/>
            <person name="Awad M.M."/>
            <person name="Brinkac L.M."/>
            <person name="Daugherty S.C."/>
            <person name="Haft D.H."/>
            <person name="Dodson R.J."/>
            <person name="Madupu R."/>
            <person name="Nelson W.C."/>
            <person name="Rosovitz M.J."/>
            <person name="Sullivan S.A."/>
            <person name="Khouri H."/>
            <person name="Dimitrov G.I."/>
            <person name="Watkins K.L."/>
            <person name="Mulligan S."/>
            <person name="Benton J."/>
            <person name="Radune D."/>
            <person name="Fisher D.J."/>
            <person name="Atkins H.S."/>
            <person name="Hiscox T."/>
            <person name="Jost B.H."/>
            <person name="Billington S.J."/>
            <person name="Songer J.G."/>
            <person name="McClane B.A."/>
            <person name="Titball R.W."/>
            <person name="Rood J.I."/>
            <person name="Melville S.B."/>
            <person name="Paulsen I.T."/>
        </authorList>
    </citation>
    <scope>NUCLEOTIDE SEQUENCE [LARGE SCALE GENOMIC DNA]</scope>
    <source>
        <strain>ATCC 13124 / DSM 756 / JCM 1290 / NCIMB 6125 / NCTC 8237 / S 107 / Type A</strain>
    </source>
</reference>
<dbReference type="EC" id="1.3.1.44" evidence="1"/>
<dbReference type="EMBL" id="CP000246">
    <property type="protein sequence ID" value="ABG83080.1"/>
    <property type="molecule type" value="Genomic_DNA"/>
</dbReference>
<dbReference type="RefSeq" id="WP_011591043.1">
    <property type="nucleotide sequence ID" value="NC_008261.1"/>
</dbReference>
<dbReference type="SMR" id="Q0TNN6"/>
<dbReference type="STRING" id="195103.CPF_2331"/>
<dbReference type="PaxDb" id="195103-CPF_2331"/>
<dbReference type="KEGG" id="cpf:CPF_2331"/>
<dbReference type="eggNOG" id="COG3007">
    <property type="taxonomic scope" value="Bacteria"/>
</dbReference>
<dbReference type="HOGENOM" id="CLU_057698_1_0_9"/>
<dbReference type="UniPathway" id="UPA00094"/>
<dbReference type="Proteomes" id="UP000001823">
    <property type="component" value="Chromosome"/>
</dbReference>
<dbReference type="GO" id="GO:0004318">
    <property type="term" value="F:enoyl-[acyl-carrier-protein] reductase (NADH) activity"/>
    <property type="evidence" value="ECO:0007669"/>
    <property type="project" value="TreeGrafter"/>
</dbReference>
<dbReference type="GO" id="GO:0051287">
    <property type="term" value="F:NAD binding"/>
    <property type="evidence" value="ECO:0007669"/>
    <property type="project" value="UniProtKB-UniRule"/>
</dbReference>
<dbReference type="GO" id="GO:0050343">
    <property type="term" value="F:trans-2-enoyl-CoA reductase (NADH) activity"/>
    <property type="evidence" value="ECO:0007669"/>
    <property type="project" value="UniProtKB-UniRule"/>
</dbReference>
<dbReference type="GO" id="GO:0006633">
    <property type="term" value="P:fatty acid biosynthetic process"/>
    <property type="evidence" value="ECO:0007669"/>
    <property type="project" value="UniProtKB-UniRule"/>
</dbReference>
<dbReference type="Gene3D" id="3.40.50.720">
    <property type="entry name" value="NAD(P)-binding Rossmann-like Domain"/>
    <property type="match status" value="1"/>
</dbReference>
<dbReference type="HAMAP" id="MF_01838">
    <property type="entry name" value="FabV_reductase"/>
    <property type="match status" value="1"/>
</dbReference>
<dbReference type="InterPro" id="IPR024906">
    <property type="entry name" value="Eno_Rdtase_FAD-bd_dom"/>
</dbReference>
<dbReference type="InterPro" id="IPR024910">
    <property type="entry name" value="Enoyl-CoA_Rdtase_cat_dom"/>
</dbReference>
<dbReference type="InterPro" id="IPR050048">
    <property type="entry name" value="FabV-like_NADH_b"/>
</dbReference>
<dbReference type="InterPro" id="IPR036291">
    <property type="entry name" value="NAD(P)-bd_dom_sf"/>
</dbReference>
<dbReference type="InterPro" id="IPR010758">
    <property type="entry name" value="Trans-2-enoyl-CoA_reductase"/>
</dbReference>
<dbReference type="NCBIfam" id="NF043048">
    <property type="entry name" value="EnoyACPredFabV"/>
    <property type="match status" value="1"/>
</dbReference>
<dbReference type="NCBIfam" id="NF010177">
    <property type="entry name" value="PRK13656.1"/>
    <property type="match status" value="1"/>
</dbReference>
<dbReference type="PANTHER" id="PTHR37480">
    <property type="entry name" value="ENOYL-[ACYL-CARRIER-PROTEIN] REDUCTASE [NADH]"/>
    <property type="match status" value="1"/>
</dbReference>
<dbReference type="PANTHER" id="PTHR37480:SF1">
    <property type="entry name" value="ENOYL-[ACYL-CARRIER-PROTEIN] REDUCTASE [NADH]"/>
    <property type="match status" value="1"/>
</dbReference>
<dbReference type="Pfam" id="PF07055">
    <property type="entry name" value="Eno-Rase_FAD_bd"/>
    <property type="match status" value="1"/>
</dbReference>
<dbReference type="Pfam" id="PF12242">
    <property type="entry name" value="Eno-Rase_NADH_b"/>
    <property type="match status" value="1"/>
</dbReference>
<dbReference type="Pfam" id="PF12241">
    <property type="entry name" value="Enoyl_reductase"/>
    <property type="match status" value="1"/>
</dbReference>
<dbReference type="SUPFAM" id="SSF51735">
    <property type="entry name" value="NAD(P)-binding Rossmann-fold domains"/>
    <property type="match status" value="1"/>
</dbReference>
<gene>
    <name evidence="1" type="primary">fabV</name>
    <name type="ordered locus">CPF_2331</name>
</gene>
<proteinExistence type="inferred from homology"/>